<protein>
    <recommendedName>
        <fullName>U2-agatoxin-Ao1z</fullName>
        <shortName>U2-AGTX-Ao1z</shortName>
    </recommendedName>
    <alternativeName>
        <fullName>Agel_25</fullName>
    </alternativeName>
</protein>
<reference key="1">
    <citation type="journal article" date="2005" name="Proteins">
        <title>A novel strategy for the identification of toxinlike structures in spider venom.</title>
        <authorList>
            <person name="Kozlov S.A."/>
            <person name="Malyavka A."/>
            <person name="McCutchen B."/>
            <person name="Lu A."/>
            <person name="Schepers E."/>
            <person name="Herrmann R."/>
            <person name="Grishin E.V."/>
        </authorList>
    </citation>
    <scope>NUCLEOTIDE SEQUENCE [MRNA]</scope>
    <source>
        <tissue>Venom gland</tissue>
    </source>
</reference>
<name>TAG2Z_AGEOR</name>
<proteinExistence type="evidence at transcript level"/>
<accession>Q5Y4W2</accession>
<dbReference type="EMBL" id="AY681322">
    <property type="protein sequence ID" value="AAU93678.1"/>
    <property type="molecule type" value="mRNA"/>
</dbReference>
<dbReference type="SMR" id="Q5Y4W2"/>
<dbReference type="ArachnoServer" id="AS000090">
    <property type="toxin name" value="U2-agatoxin-Ao1z"/>
</dbReference>
<dbReference type="GO" id="GO:0005576">
    <property type="term" value="C:extracellular region"/>
    <property type="evidence" value="ECO:0007669"/>
    <property type="project" value="UniProtKB-SubCell"/>
</dbReference>
<dbReference type="GO" id="GO:0090729">
    <property type="term" value="F:toxin activity"/>
    <property type="evidence" value="ECO:0007669"/>
    <property type="project" value="UniProtKB-KW"/>
</dbReference>
<dbReference type="Pfam" id="PF05980">
    <property type="entry name" value="Toxin_7"/>
    <property type="match status" value="1"/>
</dbReference>
<dbReference type="SUPFAM" id="SSF57059">
    <property type="entry name" value="omega toxin-like"/>
    <property type="match status" value="1"/>
</dbReference>
<keyword id="KW-0027">Amidation</keyword>
<keyword id="KW-1015">Disulfide bond</keyword>
<keyword id="KW-0960">Knottin</keyword>
<keyword id="KW-0528">Neurotoxin</keyword>
<keyword id="KW-0964">Secreted</keyword>
<keyword id="KW-0732">Signal</keyword>
<keyword id="KW-0800">Toxin</keyword>
<evidence type="ECO:0000250" key="1"/>
<evidence type="ECO:0000255" key="2"/>
<evidence type="ECO:0000305" key="3"/>
<comment type="function">
    <text evidence="1">Insect active toxin causing rapid but reversible paralysis in crickets. No activity shown in mammals. Does not show effect on mammalian voltage-gated calcium channels (By similarity).</text>
</comment>
<comment type="subcellular location">
    <subcellularLocation>
        <location evidence="1">Secreted</location>
    </subcellularLocation>
</comment>
<comment type="tissue specificity">
    <text>Expressed by the venom gland.</text>
</comment>
<comment type="domain">
    <text evidence="1">The presence of a 'disulfide through disulfide knot' structurally defines this protein as a knottin.</text>
</comment>
<comment type="similarity">
    <text evidence="3">Belongs to the neurotoxin 01 (U2-agtx) family.</text>
</comment>
<organism>
    <name type="scientific">Agelena orientalis</name>
    <name type="common">Funnel-web spider</name>
    <dbReference type="NCBI Taxonomy" id="293813"/>
    <lineage>
        <taxon>Eukaryota</taxon>
        <taxon>Metazoa</taxon>
        <taxon>Ecdysozoa</taxon>
        <taxon>Arthropoda</taxon>
        <taxon>Chelicerata</taxon>
        <taxon>Arachnida</taxon>
        <taxon>Araneae</taxon>
        <taxon>Araneomorphae</taxon>
        <taxon>Entelegynae</taxon>
        <taxon>Agelenidae</taxon>
        <taxon>Agelena</taxon>
    </lineage>
</organism>
<feature type="signal peptide" evidence="2">
    <location>
        <begin position="1"/>
        <end position="20"/>
    </location>
</feature>
<feature type="propeptide" id="PRO_5000093647" evidence="2">
    <location>
        <begin position="21"/>
        <end position="34"/>
    </location>
</feature>
<feature type="chain" id="PRO_5000093648" description="U2-agatoxin-Ao1z">
    <location>
        <begin position="35"/>
        <end position="69"/>
    </location>
</feature>
<feature type="disulfide bond" evidence="1">
    <location>
        <begin position="37"/>
        <end position="53"/>
    </location>
</feature>
<feature type="disulfide bond" evidence="1">
    <location>
        <begin position="44"/>
        <end position="58"/>
    </location>
</feature>
<feature type="disulfide bond" evidence="1">
    <location>
        <begin position="52"/>
        <end position="68"/>
    </location>
</feature>
<sequence length="69" mass="7547">MRAIISLLLISAMVFSMIEAVPVEEGLQLFEGERGGCLPRNKFCNPSSGPRCCSGLTCKELNIWANKCL</sequence>